<accession>Q8F495</accession>
<reference key="1">
    <citation type="journal article" date="2003" name="Nature">
        <title>Unique physiological and pathogenic features of Leptospira interrogans revealed by whole-genome sequencing.</title>
        <authorList>
            <person name="Ren S.-X."/>
            <person name="Fu G."/>
            <person name="Jiang X.-G."/>
            <person name="Zeng R."/>
            <person name="Miao Y.-G."/>
            <person name="Xu H."/>
            <person name="Zhang Y.-X."/>
            <person name="Xiong H."/>
            <person name="Lu G."/>
            <person name="Lu L.-F."/>
            <person name="Jiang H.-Q."/>
            <person name="Jia J."/>
            <person name="Tu Y.-F."/>
            <person name="Jiang J.-X."/>
            <person name="Gu W.-Y."/>
            <person name="Zhang Y.-Q."/>
            <person name="Cai Z."/>
            <person name="Sheng H.-H."/>
            <person name="Yin H.-F."/>
            <person name="Zhang Y."/>
            <person name="Zhu G.-F."/>
            <person name="Wan M."/>
            <person name="Huang H.-L."/>
            <person name="Qian Z."/>
            <person name="Wang S.-Y."/>
            <person name="Ma W."/>
            <person name="Yao Z.-J."/>
            <person name="Shen Y."/>
            <person name="Qiang B.-Q."/>
            <person name="Xia Q.-C."/>
            <person name="Guo X.-K."/>
            <person name="Danchin A."/>
            <person name="Saint Girons I."/>
            <person name="Somerville R.L."/>
            <person name="Wen Y.-M."/>
            <person name="Shi M.-H."/>
            <person name="Chen Z."/>
            <person name="Xu J.-G."/>
            <person name="Zhao G.-P."/>
        </authorList>
    </citation>
    <scope>NUCLEOTIDE SEQUENCE [LARGE SCALE GENOMIC DNA]</scope>
    <source>
        <strain>56601</strain>
    </source>
</reference>
<evidence type="ECO:0000255" key="1">
    <source>
        <dbReference type="HAMAP-Rule" id="MF_00135"/>
    </source>
</evidence>
<evidence type="ECO:0000305" key="2"/>
<organism>
    <name type="scientific">Leptospira interrogans serogroup Icterohaemorrhagiae serovar Lai (strain 56601)</name>
    <dbReference type="NCBI Taxonomy" id="189518"/>
    <lineage>
        <taxon>Bacteria</taxon>
        <taxon>Pseudomonadati</taxon>
        <taxon>Spirochaetota</taxon>
        <taxon>Spirochaetia</taxon>
        <taxon>Leptospirales</taxon>
        <taxon>Leptospiraceae</taxon>
        <taxon>Leptospira</taxon>
    </lineage>
</organism>
<feature type="chain" id="PRO_0000154362" description="N-(5'-phosphoribosyl)anthranilate isomerase">
    <location>
        <begin position="1"/>
        <end position="213"/>
    </location>
</feature>
<proteinExistence type="inferred from homology"/>
<protein>
    <recommendedName>
        <fullName evidence="1">N-(5'-phosphoribosyl)anthranilate isomerase</fullName>
        <shortName evidence="1">PRAI</shortName>
        <ecNumber evidence="1">5.3.1.24</ecNumber>
    </recommendedName>
</protein>
<sequence>MITNSLQKTKVKICGIKDLEIAKICKEEGADYIGFNFVSSSPRKIELSNAQKIVEYYKSEKNSPEIVLLFYQNSFEEIESITSVLDHDLVQWVWDDPLINRKKLLYKRQICSYRVQTQIHDQDLKDIEAEFLILDSYSKGVGGGTGETFNWELISKVKRKFLLAGGLDPSNVVNAIEIVKPFGVDVASGVESSPGIKDPQKVIQFIRNVKSTS</sequence>
<gene>
    <name evidence="1" type="primary">trpF</name>
    <name type="ordered locus">LA_2147</name>
</gene>
<dbReference type="EC" id="5.3.1.24" evidence="1"/>
<dbReference type="EMBL" id="AE010300">
    <property type="protein sequence ID" value="AAN49346.1"/>
    <property type="status" value="ALT_INIT"/>
    <property type="molecule type" value="Genomic_DNA"/>
</dbReference>
<dbReference type="RefSeq" id="NP_712328.1">
    <property type="nucleotide sequence ID" value="NC_004342.2"/>
</dbReference>
<dbReference type="RefSeq" id="WP_001984951.1">
    <property type="nucleotide sequence ID" value="NC_004342.2"/>
</dbReference>
<dbReference type="SMR" id="Q8F495"/>
<dbReference type="STRING" id="189518.LA_2147"/>
<dbReference type="PaxDb" id="189518-LA_2147"/>
<dbReference type="EnsemblBacteria" id="AAN49346">
    <property type="protein sequence ID" value="AAN49346"/>
    <property type="gene ID" value="LA_2147"/>
</dbReference>
<dbReference type="KEGG" id="lil:LA_2147"/>
<dbReference type="PATRIC" id="fig|189518.3.peg.2139"/>
<dbReference type="HOGENOM" id="CLU_076364_2_0_12"/>
<dbReference type="InParanoid" id="Q8F495"/>
<dbReference type="OrthoDB" id="9786954at2"/>
<dbReference type="UniPathway" id="UPA00035">
    <property type="reaction ID" value="UER00042"/>
</dbReference>
<dbReference type="Proteomes" id="UP000001408">
    <property type="component" value="Chromosome I"/>
</dbReference>
<dbReference type="GO" id="GO:0004640">
    <property type="term" value="F:phosphoribosylanthranilate isomerase activity"/>
    <property type="evidence" value="ECO:0000318"/>
    <property type="project" value="GO_Central"/>
</dbReference>
<dbReference type="GO" id="GO:0000162">
    <property type="term" value="P:L-tryptophan biosynthetic process"/>
    <property type="evidence" value="ECO:0000318"/>
    <property type="project" value="GO_Central"/>
</dbReference>
<dbReference type="CDD" id="cd00405">
    <property type="entry name" value="PRAI"/>
    <property type="match status" value="1"/>
</dbReference>
<dbReference type="Gene3D" id="3.20.20.70">
    <property type="entry name" value="Aldolase class I"/>
    <property type="match status" value="1"/>
</dbReference>
<dbReference type="HAMAP" id="MF_00135">
    <property type="entry name" value="PRAI"/>
    <property type="match status" value="1"/>
</dbReference>
<dbReference type="InterPro" id="IPR013785">
    <property type="entry name" value="Aldolase_TIM"/>
</dbReference>
<dbReference type="InterPro" id="IPR001240">
    <property type="entry name" value="PRAI_dom"/>
</dbReference>
<dbReference type="InterPro" id="IPR011060">
    <property type="entry name" value="RibuloseP-bd_barrel"/>
</dbReference>
<dbReference type="InterPro" id="IPR044643">
    <property type="entry name" value="TrpF_fam"/>
</dbReference>
<dbReference type="PANTHER" id="PTHR42894">
    <property type="entry name" value="N-(5'-PHOSPHORIBOSYL)ANTHRANILATE ISOMERASE"/>
    <property type="match status" value="1"/>
</dbReference>
<dbReference type="PANTHER" id="PTHR42894:SF1">
    <property type="entry name" value="N-(5'-PHOSPHORIBOSYL)ANTHRANILATE ISOMERASE"/>
    <property type="match status" value="1"/>
</dbReference>
<dbReference type="Pfam" id="PF00697">
    <property type="entry name" value="PRAI"/>
    <property type="match status" value="1"/>
</dbReference>
<dbReference type="SUPFAM" id="SSF51366">
    <property type="entry name" value="Ribulose-phoshate binding barrel"/>
    <property type="match status" value="1"/>
</dbReference>
<comment type="catalytic activity">
    <reaction evidence="1">
        <text>N-(5-phospho-beta-D-ribosyl)anthranilate = 1-(2-carboxyphenylamino)-1-deoxy-D-ribulose 5-phosphate</text>
        <dbReference type="Rhea" id="RHEA:21540"/>
        <dbReference type="ChEBI" id="CHEBI:18277"/>
        <dbReference type="ChEBI" id="CHEBI:58613"/>
        <dbReference type="EC" id="5.3.1.24"/>
    </reaction>
</comment>
<comment type="pathway">
    <text evidence="1">Amino-acid biosynthesis; L-tryptophan biosynthesis; L-tryptophan from chorismate: step 3/5.</text>
</comment>
<comment type="similarity">
    <text evidence="1">Belongs to the TrpF family.</text>
</comment>
<comment type="sequence caution" evidence="2">
    <conflict type="erroneous initiation">
        <sequence resource="EMBL-CDS" id="AAN49346"/>
    </conflict>
</comment>
<keyword id="KW-0028">Amino-acid biosynthesis</keyword>
<keyword id="KW-0057">Aromatic amino acid biosynthesis</keyword>
<keyword id="KW-0413">Isomerase</keyword>
<keyword id="KW-1185">Reference proteome</keyword>
<keyword id="KW-0822">Tryptophan biosynthesis</keyword>
<name>TRPF_LEPIN</name>